<organism>
    <name type="scientific">Xanthomonas axonopodis pv. citri (strain 306)</name>
    <dbReference type="NCBI Taxonomy" id="190486"/>
    <lineage>
        <taxon>Bacteria</taxon>
        <taxon>Pseudomonadati</taxon>
        <taxon>Pseudomonadota</taxon>
        <taxon>Gammaproteobacteria</taxon>
        <taxon>Lysobacterales</taxon>
        <taxon>Lysobacteraceae</taxon>
        <taxon>Xanthomonas</taxon>
    </lineage>
</organism>
<proteinExistence type="inferred from homology"/>
<sequence length="92" mass="10337">MSGITRDSRPALRAGVRLQQDRARDQWVLLAPERVVELDDIALVVAQRYDGTRSLAQIAQELAAEFDADAAQIEADVIELTDTLHQKRLLRL</sequence>
<comment type="function">
    <text evidence="1">Functions as a PqqA binding protein and presents PqqA to PqqE, in the pyrroloquinoline quinone (PQQ) biosynthetic pathway.</text>
</comment>
<comment type="pathway">
    <text evidence="1">Cofactor biosynthesis; pyrroloquinoline quinone biosynthesis.</text>
</comment>
<comment type="subunit">
    <text evidence="1">Monomer. Interacts with PqqE.</text>
</comment>
<comment type="similarity">
    <text evidence="1">Belongs to the PqqD family.</text>
</comment>
<accession>Q8PHY2</accession>
<name>PQQD_XANAC</name>
<reference key="1">
    <citation type="journal article" date="2002" name="Nature">
        <title>Comparison of the genomes of two Xanthomonas pathogens with differing host specificities.</title>
        <authorList>
            <person name="da Silva A.C.R."/>
            <person name="Ferro J.A."/>
            <person name="Reinach F.C."/>
            <person name="Farah C.S."/>
            <person name="Furlan L.R."/>
            <person name="Quaggio R.B."/>
            <person name="Monteiro-Vitorello C.B."/>
            <person name="Van Sluys M.A."/>
            <person name="Almeida N.F. Jr."/>
            <person name="Alves L.M.C."/>
            <person name="do Amaral A.M."/>
            <person name="Bertolini M.C."/>
            <person name="Camargo L.E.A."/>
            <person name="Camarotte G."/>
            <person name="Cannavan F."/>
            <person name="Cardozo J."/>
            <person name="Chambergo F."/>
            <person name="Ciapina L.P."/>
            <person name="Cicarelli R.M.B."/>
            <person name="Coutinho L.L."/>
            <person name="Cursino-Santos J.R."/>
            <person name="El-Dorry H."/>
            <person name="Faria J.B."/>
            <person name="Ferreira A.J.S."/>
            <person name="Ferreira R.C.C."/>
            <person name="Ferro M.I.T."/>
            <person name="Formighieri E.F."/>
            <person name="Franco M.C."/>
            <person name="Greggio C.C."/>
            <person name="Gruber A."/>
            <person name="Katsuyama A.M."/>
            <person name="Kishi L.T."/>
            <person name="Leite R.P."/>
            <person name="Lemos E.G.M."/>
            <person name="Lemos M.V.F."/>
            <person name="Locali E.C."/>
            <person name="Machado M.A."/>
            <person name="Madeira A.M.B.N."/>
            <person name="Martinez-Rossi N.M."/>
            <person name="Martins E.C."/>
            <person name="Meidanis J."/>
            <person name="Menck C.F.M."/>
            <person name="Miyaki C.Y."/>
            <person name="Moon D.H."/>
            <person name="Moreira L.M."/>
            <person name="Novo M.T.M."/>
            <person name="Okura V.K."/>
            <person name="Oliveira M.C."/>
            <person name="Oliveira V.R."/>
            <person name="Pereira H.A."/>
            <person name="Rossi A."/>
            <person name="Sena J.A.D."/>
            <person name="Silva C."/>
            <person name="de Souza R.F."/>
            <person name="Spinola L.A.F."/>
            <person name="Takita M.A."/>
            <person name="Tamura R.E."/>
            <person name="Teixeira E.C."/>
            <person name="Tezza R.I.D."/>
            <person name="Trindade dos Santos M."/>
            <person name="Truffi D."/>
            <person name="Tsai S.M."/>
            <person name="White F.F."/>
            <person name="Setubal J.C."/>
            <person name="Kitajima J.P."/>
        </authorList>
    </citation>
    <scope>NUCLEOTIDE SEQUENCE [LARGE SCALE GENOMIC DNA]</scope>
    <source>
        <strain>306</strain>
    </source>
</reference>
<dbReference type="EMBL" id="AE008923">
    <property type="protein sequence ID" value="AAM37961.1"/>
    <property type="molecule type" value="Genomic_DNA"/>
</dbReference>
<dbReference type="RefSeq" id="WP_005921459.1">
    <property type="nucleotide sequence ID" value="NC_003919.1"/>
</dbReference>
<dbReference type="SMR" id="Q8PHY2"/>
<dbReference type="GeneID" id="66912183"/>
<dbReference type="KEGG" id="xac:XAC3116"/>
<dbReference type="eggNOG" id="COG0535">
    <property type="taxonomic scope" value="Bacteria"/>
</dbReference>
<dbReference type="HOGENOM" id="CLU_163864_0_0_6"/>
<dbReference type="UniPathway" id="UPA00539"/>
<dbReference type="Proteomes" id="UP000000576">
    <property type="component" value="Chromosome"/>
</dbReference>
<dbReference type="GO" id="GO:0048038">
    <property type="term" value="F:quinone binding"/>
    <property type="evidence" value="ECO:0007669"/>
    <property type="project" value="InterPro"/>
</dbReference>
<dbReference type="GO" id="GO:0018189">
    <property type="term" value="P:pyrroloquinoline quinone biosynthetic process"/>
    <property type="evidence" value="ECO:0007669"/>
    <property type="project" value="UniProtKB-UniRule"/>
</dbReference>
<dbReference type="Gene3D" id="1.10.10.1150">
    <property type="entry name" value="Coenzyme PQQ synthesis protein D (PqqD)"/>
    <property type="match status" value="1"/>
</dbReference>
<dbReference type="HAMAP" id="MF_00655">
    <property type="entry name" value="PQQ_syn_PqqD"/>
    <property type="match status" value="1"/>
</dbReference>
<dbReference type="InterPro" id="IPR008792">
    <property type="entry name" value="PQQD"/>
</dbReference>
<dbReference type="InterPro" id="IPR022479">
    <property type="entry name" value="PqqD_bac"/>
</dbReference>
<dbReference type="InterPro" id="IPR041881">
    <property type="entry name" value="PqqD_sf"/>
</dbReference>
<dbReference type="NCBIfam" id="TIGR03859">
    <property type="entry name" value="PQQ_PqqD"/>
    <property type="match status" value="1"/>
</dbReference>
<dbReference type="Pfam" id="PF05402">
    <property type="entry name" value="PqqD"/>
    <property type="match status" value="1"/>
</dbReference>
<protein>
    <recommendedName>
        <fullName evidence="1">PqqA binding protein</fullName>
    </recommendedName>
    <alternativeName>
        <fullName evidence="1">Coenzyme PQQ synthesis protein D</fullName>
    </alternativeName>
    <alternativeName>
        <fullName evidence="1">Pyrroloquinoline quinone biosynthesis protein D</fullName>
    </alternativeName>
</protein>
<feature type="chain" id="PRO_0000219973" description="PqqA binding protein">
    <location>
        <begin position="1"/>
        <end position="92"/>
    </location>
</feature>
<keyword id="KW-0884">PQQ biosynthesis</keyword>
<evidence type="ECO:0000255" key="1">
    <source>
        <dbReference type="HAMAP-Rule" id="MF_00655"/>
    </source>
</evidence>
<gene>
    <name evidence="1" type="primary">pqqD</name>
    <name type="ordered locus">XAC3116</name>
</gene>